<evidence type="ECO:0000255" key="1">
    <source>
        <dbReference type="HAMAP-Rule" id="MF_00537"/>
    </source>
</evidence>
<evidence type="ECO:0000305" key="2"/>
<name>RS14_CHLPM</name>
<feature type="chain" id="PRO_1000128508" description="Small ribosomal subunit protein uS14">
    <location>
        <begin position="1"/>
        <end position="89"/>
    </location>
</feature>
<keyword id="KW-0687">Ribonucleoprotein</keyword>
<keyword id="KW-0689">Ribosomal protein</keyword>
<keyword id="KW-0694">RNA-binding</keyword>
<keyword id="KW-0699">rRNA-binding</keyword>
<comment type="function">
    <text evidence="1">Binds 16S rRNA, required for the assembly of 30S particles and may also be responsible for determining the conformation of the 16S rRNA at the A site.</text>
</comment>
<comment type="subunit">
    <text evidence="1">Part of the 30S ribosomal subunit. Contacts proteins S3 and S10.</text>
</comment>
<comment type="similarity">
    <text evidence="1">Belongs to the universal ribosomal protein uS14 family.</text>
</comment>
<protein>
    <recommendedName>
        <fullName evidence="1">Small ribosomal subunit protein uS14</fullName>
    </recommendedName>
    <alternativeName>
        <fullName evidence="2">30S ribosomal protein S14</fullName>
    </alternativeName>
</protein>
<dbReference type="EMBL" id="CP000607">
    <property type="protein sequence ID" value="ABP36281.1"/>
    <property type="molecule type" value="Genomic_DNA"/>
</dbReference>
<dbReference type="SMR" id="A4SCS2"/>
<dbReference type="STRING" id="290318.Cvib_0259"/>
<dbReference type="KEGG" id="pvi:Cvib_0259"/>
<dbReference type="eggNOG" id="COG0199">
    <property type="taxonomic scope" value="Bacteria"/>
</dbReference>
<dbReference type="HOGENOM" id="CLU_139869_0_0_10"/>
<dbReference type="OrthoDB" id="9810484at2"/>
<dbReference type="GO" id="GO:0005737">
    <property type="term" value="C:cytoplasm"/>
    <property type="evidence" value="ECO:0007669"/>
    <property type="project" value="UniProtKB-ARBA"/>
</dbReference>
<dbReference type="GO" id="GO:0015935">
    <property type="term" value="C:small ribosomal subunit"/>
    <property type="evidence" value="ECO:0007669"/>
    <property type="project" value="TreeGrafter"/>
</dbReference>
<dbReference type="GO" id="GO:0019843">
    <property type="term" value="F:rRNA binding"/>
    <property type="evidence" value="ECO:0007669"/>
    <property type="project" value="UniProtKB-UniRule"/>
</dbReference>
<dbReference type="GO" id="GO:0003735">
    <property type="term" value="F:structural constituent of ribosome"/>
    <property type="evidence" value="ECO:0007669"/>
    <property type="project" value="InterPro"/>
</dbReference>
<dbReference type="GO" id="GO:0006412">
    <property type="term" value="P:translation"/>
    <property type="evidence" value="ECO:0007669"/>
    <property type="project" value="UniProtKB-UniRule"/>
</dbReference>
<dbReference type="Gene3D" id="4.10.830.10">
    <property type="entry name" value="30s Ribosomal Protein S14, Chain N"/>
    <property type="match status" value="1"/>
</dbReference>
<dbReference type="HAMAP" id="MF_00537">
    <property type="entry name" value="Ribosomal_uS14_1"/>
    <property type="match status" value="1"/>
</dbReference>
<dbReference type="InterPro" id="IPR001209">
    <property type="entry name" value="Ribosomal_uS14"/>
</dbReference>
<dbReference type="InterPro" id="IPR023036">
    <property type="entry name" value="Ribosomal_uS14_bac/plastid"/>
</dbReference>
<dbReference type="InterPro" id="IPR018271">
    <property type="entry name" value="Ribosomal_uS14_CS"/>
</dbReference>
<dbReference type="InterPro" id="IPR043140">
    <property type="entry name" value="Ribosomal_uS14_sf"/>
</dbReference>
<dbReference type="NCBIfam" id="NF006477">
    <property type="entry name" value="PRK08881.1"/>
    <property type="match status" value="1"/>
</dbReference>
<dbReference type="PANTHER" id="PTHR19836">
    <property type="entry name" value="30S RIBOSOMAL PROTEIN S14"/>
    <property type="match status" value="1"/>
</dbReference>
<dbReference type="PANTHER" id="PTHR19836:SF19">
    <property type="entry name" value="SMALL RIBOSOMAL SUBUNIT PROTEIN US14M"/>
    <property type="match status" value="1"/>
</dbReference>
<dbReference type="Pfam" id="PF00253">
    <property type="entry name" value="Ribosomal_S14"/>
    <property type="match status" value="1"/>
</dbReference>
<dbReference type="SUPFAM" id="SSF57716">
    <property type="entry name" value="Glucocorticoid receptor-like (DNA-binding domain)"/>
    <property type="match status" value="1"/>
</dbReference>
<dbReference type="PROSITE" id="PS00527">
    <property type="entry name" value="RIBOSOMAL_S14"/>
    <property type="match status" value="1"/>
</dbReference>
<reference key="1">
    <citation type="submission" date="2007-03" db="EMBL/GenBank/DDBJ databases">
        <title>Complete sequence of Prosthecochloris vibrioformis DSM 265.</title>
        <authorList>
            <consortium name="US DOE Joint Genome Institute"/>
            <person name="Copeland A."/>
            <person name="Lucas S."/>
            <person name="Lapidus A."/>
            <person name="Barry K."/>
            <person name="Detter J.C."/>
            <person name="Glavina del Rio T."/>
            <person name="Hammon N."/>
            <person name="Israni S."/>
            <person name="Pitluck S."/>
            <person name="Schmutz J."/>
            <person name="Larimer F."/>
            <person name="Land M."/>
            <person name="Hauser L."/>
            <person name="Mikhailova N."/>
            <person name="Li T."/>
            <person name="Overmann J."/>
            <person name="Schuster S.C."/>
            <person name="Bryant D.A."/>
            <person name="Richardson P."/>
        </authorList>
    </citation>
    <scope>NUCLEOTIDE SEQUENCE [LARGE SCALE GENOMIC DNA]</scope>
    <source>
        <strain>DSM 265 / 1930</strain>
    </source>
</reference>
<organism>
    <name type="scientific">Chlorobium phaeovibrioides (strain DSM 265 / 1930)</name>
    <name type="common">Prosthecochloris vibrioformis (strain DSM 265)</name>
    <dbReference type="NCBI Taxonomy" id="290318"/>
    <lineage>
        <taxon>Bacteria</taxon>
        <taxon>Pseudomonadati</taxon>
        <taxon>Chlorobiota</taxon>
        <taxon>Chlorobiia</taxon>
        <taxon>Chlorobiales</taxon>
        <taxon>Chlorobiaceae</taxon>
        <taxon>Chlorobium/Pelodictyon group</taxon>
        <taxon>Chlorobium</taxon>
    </lineage>
</organism>
<proteinExistence type="inferred from homology"/>
<gene>
    <name evidence="1" type="primary">rpsN</name>
    <name type="ordered locus">Cvib_0259</name>
</gene>
<accession>A4SCS2</accession>
<sequence>MAKKSVVARNEKRKRLVEKYAAKREELLKAGDYEALRKLPRDSSASRVRNRCVLTGRGRGVYEKFGLCRHMFRKLALEGKLPGVKKASW</sequence>